<gene>
    <name evidence="1" type="primary">ilvD</name>
    <name type="ordered locus">MS2219</name>
</gene>
<organism>
    <name type="scientific">Mannheimia succiniciproducens (strain KCTC 0769BP / MBEL55E)</name>
    <dbReference type="NCBI Taxonomy" id="221988"/>
    <lineage>
        <taxon>Bacteria</taxon>
        <taxon>Pseudomonadati</taxon>
        <taxon>Pseudomonadota</taxon>
        <taxon>Gammaproteobacteria</taxon>
        <taxon>Pasteurellales</taxon>
        <taxon>Pasteurellaceae</taxon>
        <taxon>Basfia</taxon>
    </lineage>
</organism>
<name>ILVD_MANSM</name>
<evidence type="ECO:0000255" key="1">
    <source>
        <dbReference type="HAMAP-Rule" id="MF_00012"/>
    </source>
</evidence>
<protein>
    <recommendedName>
        <fullName evidence="1">Dihydroxy-acid dehydratase</fullName>
        <shortName evidence="1">DAD</shortName>
        <ecNumber evidence="1">4.2.1.9</ecNumber>
    </recommendedName>
</protein>
<sequence length="615" mass="65867">MEIFMPKLRSATSTQGRNMAGARSLWRATGMKEGDFGKPIIAVVNSFTQFVPGHVHLHDIGQMVVKQIEAAGGVAKEFNTIAVDDGIAMGHGGMLYSLPSRDLIADSVEYMVNAHCADAMVCISNCDKITPGMLMAAMRLNIPTIFVSGGPMEAGKTKLSDQLIKLDLIDAMIQSADKNVSDSDVDAIERSACPTCGSCSGMFTANSMNCLTEALGLSLPGNGSCLATHADRKQLFLDAATQIVELCKRHYEQDDYSVLPRSIATKAAFENAMSLDIAMGGSTNTVLHLLAVAQEAEVDFTMADIDRLSRIVPCLSKVAPNTNKYHMEDVHRAGGVMAILGELDRANLLHHDTKTVLGLTFAEQLAKYDIKLTRDEAVKTFYRSGPAGIRTTEAFSQDCRWETLDDDRENGCIRDKAHAYSQDGGLAMLSGNIALDGCIVKTAGVDESILKFTGEAIVFESQEDAVDGILGGKVKAGHVVVIRYEGPKGGPGMQEMLYPTSYLKSMGLGKACALLTDGRFSGGTSGLSIGHCSPEAASGGTIGLVRNGDIIAIDIPNRSIQLQVSDEELATRRAEQDVKGWKPANRAREVSFALKVFGHFATSADKGAVRDKTKL</sequence>
<reference key="1">
    <citation type="journal article" date="2004" name="Nat. Biotechnol.">
        <title>The genome sequence of the capnophilic rumen bacterium Mannheimia succiniciproducens.</title>
        <authorList>
            <person name="Hong S.H."/>
            <person name="Kim J.S."/>
            <person name="Lee S.Y."/>
            <person name="In Y.H."/>
            <person name="Choi S.S."/>
            <person name="Rih J.-K."/>
            <person name="Kim C.H."/>
            <person name="Jeong H."/>
            <person name="Hur C.G."/>
            <person name="Kim J.J."/>
        </authorList>
    </citation>
    <scope>NUCLEOTIDE SEQUENCE [LARGE SCALE GENOMIC DNA]</scope>
    <source>
        <strain>KCTC 0769BP / MBEL55E</strain>
    </source>
</reference>
<dbReference type="EC" id="4.2.1.9" evidence="1"/>
<dbReference type="EMBL" id="AE016827">
    <property type="protein sequence ID" value="AAU38826.1"/>
    <property type="molecule type" value="Genomic_DNA"/>
</dbReference>
<dbReference type="SMR" id="Q65QD4"/>
<dbReference type="STRING" id="221988.MS2219"/>
<dbReference type="KEGG" id="msu:MS2219"/>
<dbReference type="eggNOG" id="COG0129">
    <property type="taxonomic scope" value="Bacteria"/>
</dbReference>
<dbReference type="HOGENOM" id="CLU_014271_4_2_6"/>
<dbReference type="UniPathway" id="UPA00047">
    <property type="reaction ID" value="UER00057"/>
</dbReference>
<dbReference type="UniPathway" id="UPA00049">
    <property type="reaction ID" value="UER00061"/>
</dbReference>
<dbReference type="Proteomes" id="UP000000607">
    <property type="component" value="Chromosome"/>
</dbReference>
<dbReference type="GO" id="GO:0005829">
    <property type="term" value="C:cytosol"/>
    <property type="evidence" value="ECO:0007669"/>
    <property type="project" value="TreeGrafter"/>
</dbReference>
<dbReference type="GO" id="GO:0051537">
    <property type="term" value="F:2 iron, 2 sulfur cluster binding"/>
    <property type="evidence" value="ECO:0007669"/>
    <property type="project" value="UniProtKB-UniRule"/>
</dbReference>
<dbReference type="GO" id="GO:0004160">
    <property type="term" value="F:dihydroxy-acid dehydratase activity"/>
    <property type="evidence" value="ECO:0007669"/>
    <property type="project" value="UniProtKB-UniRule"/>
</dbReference>
<dbReference type="GO" id="GO:0000287">
    <property type="term" value="F:magnesium ion binding"/>
    <property type="evidence" value="ECO:0007669"/>
    <property type="project" value="UniProtKB-UniRule"/>
</dbReference>
<dbReference type="GO" id="GO:0009097">
    <property type="term" value="P:isoleucine biosynthetic process"/>
    <property type="evidence" value="ECO:0007669"/>
    <property type="project" value="UniProtKB-UniRule"/>
</dbReference>
<dbReference type="GO" id="GO:0009099">
    <property type="term" value="P:L-valine biosynthetic process"/>
    <property type="evidence" value="ECO:0007669"/>
    <property type="project" value="UniProtKB-UniRule"/>
</dbReference>
<dbReference type="FunFam" id="3.50.30.80:FF:000001">
    <property type="entry name" value="Dihydroxy-acid dehydratase"/>
    <property type="match status" value="1"/>
</dbReference>
<dbReference type="Gene3D" id="3.50.30.80">
    <property type="entry name" value="IlvD/EDD C-terminal domain-like"/>
    <property type="match status" value="1"/>
</dbReference>
<dbReference type="HAMAP" id="MF_00012">
    <property type="entry name" value="IlvD"/>
    <property type="match status" value="1"/>
</dbReference>
<dbReference type="InterPro" id="IPR042096">
    <property type="entry name" value="Dihydro-acid_dehy_C"/>
</dbReference>
<dbReference type="InterPro" id="IPR004404">
    <property type="entry name" value="DihydroxyA_deHydtase"/>
</dbReference>
<dbReference type="InterPro" id="IPR020558">
    <property type="entry name" value="DiOHA_6PGluconate_deHydtase_CS"/>
</dbReference>
<dbReference type="InterPro" id="IPR056740">
    <property type="entry name" value="ILV_EDD_C"/>
</dbReference>
<dbReference type="InterPro" id="IPR000581">
    <property type="entry name" value="ILV_EDD_N"/>
</dbReference>
<dbReference type="InterPro" id="IPR037237">
    <property type="entry name" value="IlvD/EDD_N"/>
</dbReference>
<dbReference type="NCBIfam" id="TIGR00110">
    <property type="entry name" value="ilvD"/>
    <property type="match status" value="1"/>
</dbReference>
<dbReference type="NCBIfam" id="NF009103">
    <property type="entry name" value="PRK12448.1"/>
    <property type="match status" value="1"/>
</dbReference>
<dbReference type="PANTHER" id="PTHR43661">
    <property type="entry name" value="D-XYLONATE DEHYDRATASE"/>
    <property type="match status" value="1"/>
</dbReference>
<dbReference type="PANTHER" id="PTHR43661:SF3">
    <property type="entry name" value="D-XYLONATE DEHYDRATASE YAGF-RELATED"/>
    <property type="match status" value="1"/>
</dbReference>
<dbReference type="Pfam" id="PF24877">
    <property type="entry name" value="ILV_EDD_C"/>
    <property type="match status" value="1"/>
</dbReference>
<dbReference type="Pfam" id="PF00920">
    <property type="entry name" value="ILVD_EDD_N"/>
    <property type="match status" value="1"/>
</dbReference>
<dbReference type="SUPFAM" id="SSF143975">
    <property type="entry name" value="IlvD/EDD N-terminal domain-like"/>
    <property type="match status" value="1"/>
</dbReference>
<dbReference type="SUPFAM" id="SSF52016">
    <property type="entry name" value="LeuD/IlvD-like"/>
    <property type="match status" value="1"/>
</dbReference>
<dbReference type="PROSITE" id="PS00886">
    <property type="entry name" value="ILVD_EDD_1"/>
    <property type="match status" value="1"/>
</dbReference>
<dbReference type="PROSITE" id="PS00887">
    <property type="entry name" value="ILVD_EDD_2"/>
    <property type="match status" value="1"/>
</dbReference>
<keyword id="KW-0001">2Fe-2S</keyword>
<keyword id="KW-0028">Amino-acid biosynthesis</keyword>
<keyword id="KW-0100">Branched-chain amino acid biosynthesis</keyword>
<keyword id="KW-0408">Iron</keyword>
<keyword id="KW-0411">Iron-sulfur</keyword>
<keyword id="KW-0456">Lyase</keyword>
<keyword id="KW-0460">Magnesium</keyword>
<keyword id="KW-0479">Metal-binding</keyword>
<accession>Q65QD4</accession>
<comment type="function">
    <text evidence="1">Functions in the biosynthesis of branched-chain amino acids. Catalyzes the dehydration of (2R,3R)-2,3-dihydroxy-3-methylpentanoate (2,3-dihydroxy-3-methylvalerate) into 2-oxo-3-methylpentanoate (2-oxo-3-methylvalerate) and of (2R)-2,3-dihydroxy-3-methylbutanoate (2,3-dihydroxyisovalerate) into 2-oxo-3-methylbutanoate (2-oxoisovalerate), the penultimate precursor to L-isoleucine and L-valine, respectively.</text>
</comment>
<comment type="catalytic activity">
    <reaction evidence="1">
        <text>(2R)-2,3-dihydroxy-3-methylbutanoate = 3-methyl-2-oxobutanoate + H2O</text>
        <dbReference type="Rhea" id="RHEA:24809"/>
        <dbReference type="ChEBI" id="CHEBI:11851"/>
        <dbReference type="ChEBI" id="CHEBI:15377"/>
        <dbReference type="ChEBI" id="CHEBI:49072"/>
        <dbReference type="EC" id="4.2.1.9"/>
    </reaction>
    <physiologicalReaction direction="left-to-right" evidence="1">
        <dbReference type="Rhea" id="RHEA:24810"/>
    </physiologicalReaction>
</comment>
<comment type="catalytic activity">
    <reaction evidence="1">
        <text>(2R,3R)-2,3-dihydroxy-3-methylpentanoate = (S)-3-methyl-2-oxopentanoate + H2O</text>
        <dbReference type="Rhea" id="RHEA:27694"/>
        <dbReference type="ChEBI" id="CHEBI:15377"/>
        <dbReference type="ChEBI" id="CHEBI:35146"/>
        <dbReference type="ChEBI" id="CHEBI:49258"/>
        <dbReference type="EC" id="4.2.1.9"/>
    </reaction>
    <physiologicalReaction direction="left-to-right" evidence="1">
        <dbReference type="Rhea" id="RHEA:27695"/>
    </physiologicalReaction>
</comment>
<comment type="cofactor">
    <cofactor evidence="1">
        <name>[2Fe-2S] cluster</name>
        <dbReference type="ChEBI" id="CHEBI:190135"/>
    </cofactor>
    <text evidence="1">Binds 1 [2Fe-2S] cluster per subunit. This cluster acts as a Lewis acid cofactor.</text>
</comment>
<comment type="cofactor">
    <cofactor evidence="1">
        <name>Mg(2+)</name>
        <dbReference type="ChEBI" id="CHEBI:18420"/>
    </cofactor>
</comment>
<comment type="pathway">
    <text evidence="1">Amino-acid biosynthesis; L-isoleucine biosynthesis; L-isoleucine from 2-oxobutanoate: step 3/4.</text>
</comment>
<comment type="pathway">
    <text evidence="1">Amino-acid biosynthesis; L-valine biosynthesis; L-valine from pyruvate: step 3/4.</text>
</comment>
<comment type="subunit">
    <text evidence="1">Homodimer.</text>
</comment>
<comment type="similarity">
    <text evidence="1">Belongs to the IlvD/Edd family.</text>
</comment>
<proteinExistence type="inferred from homology"/>
<feature type="chain" id="PRO_0000103479" description="Dihydroxy-acid dehydratase">
    <location>
        <begin position="1"/>
        <end position="615"/>
    </location>
</feature>
<feature type="active site" description="Proton acceptor" evidence="1">
    <location>
        <position position="521"/>
    </location>
</feature>
<feature type="binding site" evidence="1">
    <location>
        <position position="85"/>
    </location>
    <ligand>
        <name>Mg(2+)</name>
        <dbReference type="ChEBI" id="CHEBI:18420"/>
    </ligand>
</feature>
<feature type="binding site" evidence="1">
    <location>
        <position position="126"/>
    </location>
    <ligand>
        <name>[2Fe-2S] cluster</name>
        <dbReference type="ChEBI" id="CHEBI:190135"/>
    </ligand>
</feature>
<feature type="binding site" evidence="1">
    <location>
        <position position="127"/>
    </location>
    <ligand>
        <name>Mg(2+)</name>
        <dbReference type="ChEBI" id="CHEBI:18420"/>
    </ligand>
</feature>
<feature type="binding site" description="via carbamate group" evidence="1">
    <location>
        <position position="128"/>
    </location>
    <ligand>
        <name>Mg(2+)</name>
        <dbReference type="ChEBI" id="CHEBI:18420"/>
    </ligand>
</feature>
<feature type="binding site" evidence="1">
    <location>
        <position position="199"/>
    </location>
    <ligand>
        <name>[2Fe-2S] cluster</name>
        <dbReference type="ChEBI" id="CHEBI:190135"/>
    </ligand>
</feature>
<feature type="binding site" evidence="1">
    <location>
        <position position="495"/>
    </location>
    <ligand>
        <name>Mg(2+)</name>
        <dbReference type="ChEBI" id="CHEBI:18420"/>
    </ligand>
</feature>
<feature type="modified residue" description="N6-carboxylysine" evidence="1">
    <location>
        <position position="128"/>
    </location>
</feature>